<comment type="function">
    <text evidence="1">Catalyzes the phosphorylation of the position 2 hydroxy group of 4-diphosphocytidyl-2C-methyl-D-erythritol.</text>
</comment>
<comment type="catalytic activity">
    <reaction evidence="1">
        <text>4-CDP-2-C-methyl-D-erythritol + ATP = 4-CDP-2-C-methyl-D-erythritol 2-phosphate + ADP + H(+)</text>
        <dbReference type="Rhea" id="RHEA:18437"/>
        <dbReference type="ChEBI" id="CHEBI:15378"/>
        <dbReference type="ChEBI" id="CHEBI:30616"/>
        <dbReference type="ChEBI" id="CHEBI:57823"/>
        <dbReference type="ChEBI" id="CHEBI:57919"/>
        <dbReference type="ChEBI" id="CHEBI:456216"/>
        <dbReference type="EC" id="2.7.1.148"/>
    </reaction>
</comment>
<comment type="pathway">
    <text evidence="1">Isoprenoid biosynthesis; isopentenyl diphosphate biosynthesis via DXP pathway; isopentenyl diphosphate from 1-deoxy-D-xylulose 5-phosphate: step 3/6.</text>
</comment>
<comment type="similarity">
    <text evidence="1">Belongs to the GHMP kinase family. IspE subfamily.</text>
</comment>
<proteinExistence type="inferred from homology"/>
<evidence type="ECO:0000255" key="1">
    <source>
        <dbReference type="HAMAP-Rule" id="MF_00061"/>
    </source>
</evidence>
<feature type="chain" id="PRO_0000235071" description="4-diphosphocytidyl-2-C-methyl-D-erythritol kinase">
    <location>
        <begin position="1"/>
        <end position="299"/>
    </location>
</feature>
<feature type="active site" evidence="1">
    <location>
        <position position="18"/>
    </location>
</feature>
<feature type="active site" evidence="1">
    <location>
        <position position="146"/>
    </location>
</feature>
<feature type="binding site" evidence="1">
    <location>
        <begin position="104"/>
        <end position="114"/>
    </location>
    <ligand>
        <name>ATP</name>
        <dbReference type="ChEBI" id="CHEBI:30616"/>
    </ligand>
</feature>
<sequence>MTAFQNAGPSITRLAPAKINLALHVTGRRDDGYHLLDMLVVFADHGDRIHIEKAGSDSFTVSGPFASGIPAGRGNLVLKARDALRQHGGPDLSPVAIHLEKNLPIASGIGGGSSDAAATLLALNTLWQLDLDFEMLAAIGLSLGADLPMCLHGAAHGTPLIARGIGEELNDVSGIAALPMLLVNDGTALATPDVFRALTRRENAPLPPPACEGTDALCAYLRETRNDLLPAAISLAPQIEPKLALLRAKGALYAQMSGSGATCFAIFSDESALTRAAKEIADENPGWFAVPSHSFPSRA</sequence>
<reference key="1">
    <citation type="journal article" date="2005" name="J. Bacteriol.">
        <title>Completion of the genome sequence of Brucella abortus and comparison to the highly similar genomes of Brucella melitensis and Brucella suis.</title>
        <authorList>
            <person name="Halling S.M."/>
            <person name="Peterson-Burch B.D."/>
            <person name="Bricker B.J."/>
            <person name="Zuerner R.L."/>
            <person name="Qing Z."/>
            <person name="Li L.-L."/>
            <person name="Kapur V."/>
            <person name="Alt D.P."/>
            <person name="Olsen S.C."/>
        </authorList>
    </citation>
    <scope>NUCLEOTIDE SEQUENCE [LARGE SCALE GENOMIC DNA]</scope>
    <source>
        <strain>9-941</strain>
    </source>
</reference>
<organism>
    <name type="scientific">Brucella abortus biovar 1 (strain 9-941)</name>
    <dbReference type="NCBI Taxonomy" id="262698"/>
    <lineage>
        <taxon>Bacteria</taxon>
        <taxon>Pseudomonadati</taxon>
        <taxon>Pseudomonadota</taxon>
        <taxon>Alphaproteobacteria</taxon>
        <taxon>Hyphomicrobiales</taxon>
        <taxon>Brucellaceae</taxon>
        <taxon>Brucella/Ochrobactrum group</taxon>
        <taxon>Brucella</taxon>
    </lineage>
</organism>
<protein>
    <recommendedName>
        <fullName evidence="1">4-diphosphocytidyl-2-C-methyl-D-erythritol kinase</fullName>
        <shortName evidence="1">CMK</shortName>
        <ecNumber evidence="1">2.7.1.148</ecNumber>
    </recommendedName>
    <alternativeName>
        <fullName evidence="1">4-(cytidine-5'-diphospho)-2-C-methyl-D-erythritol kinase</fullName>
    </alternativeName>
</protein>
<dbReference type="EC" id="2.7.1.148" evidence="1"/>
<dbReference type="EMBL" id="AE017223">
    <property type="protein sequence ID" value="AAX73815.1"/>
    <property type="molecule type" value="Genomic_DNA"/>
</dbReference>
<dbReference type="RefSeq" id="WP_002963553.1">
    <property type="nucleotide sequence ID" value="NC_006932.1"/>
</dbReference>
<dbReference type="SMR" id="Q57EW9"/>
<dbReference type="EnsemblBacteria" id="AAX73815">
    <property type="protein sequence ID" value="AAX73815"/>
    <property type="gene ID" value="BruAb1_0418"/>
</dbReference>
<dbReference type="KEGG" id="bmb:BruAb1_0418"/>
<dbReference type="HOGENOM" id="CLU_053057_1_0_5"/>
<dbReference type="UniPathway" id="UPA00056">
    <property type="reaction ID" value="UER00094"/>
</dbReference>
<dbReference type="Proteomes" id="UP000000540">
    <property type="component" value="Chromosome I"/>
</dbReference>
<dbReference type="GO" id="GO:0050515">
    <property type="term" value="F:4-(cytidine 5'-diphospho)-2-C-methyl-D-erythritol kinase activity"/>
    <property type="evidence" value="ECO:0007669"/>
    <property type="project" value="UniProtKB-UniRule"/>
</dbReference>
<dbReference type="GO" id="GO:0005524">
    <property type="term" value="F:ATP binding"/>
    <property type="evidence" value="ECO:0007669"/>
    <property type="project" value="UniProtKB-UniRule"/>
</dbReference>
<dbReference type="GO" id="GO:0019288">
    <property type="term" value="P:isopentenyl diphosphate biosynthetic process, methylerythritol 4-phosphate pathway"/>
    <property type="evidence" value="ECO:0007669"/>
    <property type="project" value="UniProtKB-UniRule"/>
</dbReference>
<dbReference type="GO" id="GO:0016114">
    <property type="term" value="P:terpenoid biosynthetic process"/>
    <property type="evidence" value="ECO:0007669"/>
    <property type="project" value="InterPro"/>
</dbReference>
<dbReference type="Gene3D" id="3.30.230.10">
    <property type="match status" value="1"/>
</dbReference>
<dbReference type="Gene3D" id="3.30.70.890">
    <property type="entry name" value="GHMP kinase, C-terminal domain"/>
    <property type="match status" value="1"/>
</dbReference>
<dbReference type="HAMAP" id="MF_00061">
    <property type="entry name" value="IspE"/>
    <property type="match status" value="1"/>
</dbReference>
<dbReference type="InterPro" id="IPR013750">
    <property type="entry name" value="GHMP_kinase_C_dom"/>
</dbReference>
<dbReference type="InterPro" id="IPR036554">
    <property type="entry name" value="GHMP_kinase_C_sf"/>
</dbReference>
<dbReference type="InterPro" id="IPR006204">
    <property type="entry name" value="GHMP_kinase_N_dom"/>
</dbReference>
<dbReference type="InterPro" id="IPR004424">
    <property type="entry name" value="IspE"/>
</dbReference>
<dbReference type="InterPro" id="IPR020568">
    <property type="entry name" value="Ribosomal_Su5_D2-typ_SF"/>
</dbReference>
<dbReference type="InterPro" id="IPR014721">
    <property type="entry name" value="Ribsml_uS5_D2-typ_fold_subgr"/>
</dbReference>
<dbReference type="NCBIfam" id="TIGR00154">
    <property type="entry name" value="ispE"/>
    <property type="match status" value="1"/>
</dbReference>
<dbReference type="NCBIfam" id="NF011202">
    <property type="entry name" value="PRK14608.1"/>
    <property type="match status" value="1"/>
</dbReference>
<dbReference type="PANTHER" id="PTHR43527">
    <property type="entry name" value="4-DIPHOSPHOCYTIDYL-2-C-METHYL-D-ERYTHRITOL KINASE, CHLOROPLASTIC"/>
    <property type="match status" value="1"/>
</dbReference>
<dbReference type="PANTHER" id="PTHR43527:SF2">
    <property type="entry name" value="4-DIPHOSPHOCYTIDYL-2-C-METHYL-D-ERYTHRITOL KINASE, CHLOROPLASTIC"/>
    <property type="match status" value="1"/>
</dbReference>
<dbReference type="Pfam" id="PF08544">
    <property type="entry name" value="GHMP_kinases_C"/>
    <property type="match status" value="1"/>
</dbReference>
<dbReference type="Pfam" id="PF00288">
    <property type="entry name" value="GHMP_kinases_N"/>
    <property type="match status" value="1"/>
</dbReference>
<dbReference type="PIRSF" id="PIRSF010376">
    <property type="entry name" value="IspE"/>
    <property type="match status" value="1"/>
</dbReference>
<dbReference type="SUPFAM" id="SSF55060">
    <property type="entry name" value="GHMP Kinase, C-terminal domain"/>
    <property type="match status" value="1"/>
</dbReference>
<dbReference type="SUPFAM" id="SSF54211">
    <property type="entry name" value="Ribosomal protein S5 domain 2-like"/>
    <property type="match status" value="1"/>
</dbReference>
<name>ISPE_BRUAB</name>
<accession>Q57EW9</accession>
<keyword id="KW-0067">ATP-binding</keyword>
<keyword id="KW-0414">Isoprene biosynthesis</keyword>
<keyword id="KW-0418">Kinase</keyword>
<keyword id="KW-0547">Nucleotide-binding</keyword>
<keyword id="KW-0808">Transferase</keyword>
<gene>
    <name evidence="1" type="primary">ispE</name>
    <name type="ordered locus">BruAb1_0418</name>
</gene>